<protein>
    <recommendedName>
        <fullName>Serine/threonine-protein phosphatase 2A regulatory subunit B'' subunit gamma</fullName>
    </recommendedName>
</protein>
<proteinExistence type="evidence at transcript level"/>
<reference key="1">
    <citation type="journal article" date="2005" name="BMC Genomics">
        <title>Characterization of 954 bovine full-CDS cDNA sequences.</title>
        <authorList>
            <person name="Harhay G.P."/>
            <person name="Sonstegard T.S."/>
            <person name="Keele J.W."/>
            <person name="Heaton M.P."/>
            <person name="Clawson M.L."/>
            <person name="Snelling W.M."/>
            <person name="Wiedmann R.T."/>
            <person name="Van Tassell C.P."/>
            <person name="Smith T.P.L."/>
        </authorList>
    </citation>
    <scope>NUCLEOTIDE SEQUENCE [LARGE SCALE MRNA]</scope>
</reference>
<reference key="2">
    <citation type="submission" date="2005-08" db="EMBL/GenBank/DDBJ databases">
        <authorList>
            <consortium name="NIH - Mammalian Gene Collection (MGC) project"/>
        </authorList>
    </citation>
    <scope>NUCLEOTIDE SEQUENCE [LARGE SCALE MRNA]</scope>
    <source>
        <strain>Crossbred X Angus</strain>
        <tissue>Ileum</tissue>
    </source>
</reference>
<organism>
    <name type="scientific">Bos taurus</name>
    <name type="common">Bovine</name>
    <dbReference type="NCBI Taxonomy" id="9913"/>
    <lineage>
        <taxon>Eukaryota</taxon>
        <taxon>Metazoa</taxon>
        <taxon>Chordata</taxon>
        <taxon>Craniata</taxon>
        <taxon>Vertebrata</taxon>
        <taxon>Euteleostomi</taxon>
        <taxon>Mammalia</taxon>
        <taxon>Eutheria</taxon>
        <taxon>Laurasiatheria</taxon>
        <taxon>Artiodactyla</taxon>
        <taxon>Ruminantia</taxon>
        <taxon>Pecora</taxon>
        <taxon>Bovidae</taxon>
        <taxon>Bovinae</taxon>
        <taxon>Bos</taxon>
    </lineage>
</organism>
<feature type="chain" id="PRO_0000277832" description="Serine/threonine-protein phosphatase 2A regulatory subunit B'' subunit gamma">
    <location>
        <begin position="1"/>
        <end position="453"/>
    </location>
</feature>
<feature type="domain" description="EF-hand 1">
    <location>
        <begin position="273"/>
        <end position="308"/>
    </location>
</feature>
<feature type="domain" description="EF-hand 2">
    <location>
        <begin position="341"/>
        <end position="376"/>
    </location>
</feature>
<feature type="binding site" evidence="3">
    <location>
        <position position="286"/>
    </location>
    <ligand>
        <name>Ca(2+)</name>
        <dbReference type="ChEBI" id="CHEBI:29108"/>
    </ligand>
</feature>
<feature type="binding site" evidence="3">
    <location>
        <position position="288"/>
    </location>
    <ligand>
        <name>Ca(2+)</name>
        <dbReference type="ChEBI" id="CHEBI:29108"/>
    </ligand>
</feature>
<feature type="binding site" evidence="3">
    <location>
        <position position="290"/>
    </location>
    <ligand>
        <name>Ca(2+)</name>
        <dbReference type="ChEBI" id="CHEBI:29108"/>
    </ligand>
</feature>
<feature type="binding site" evidence="3">
    <location>
        <position position="292"/>
    </location>
    <ligand>
        <name>Ca(2+)</name>
        <dbReference type="ChEBI" id="CHEBI:29108"/>
    </ligand>
</feature>
<feature type="binding site" evidence="3">
    <location>
        <position position="297"/>
    </location>
    <ligand>
        <name>Ca(2+)</name>
        <dbReference type="ChEBI" id="CHEBI:29108"/>
    </ligand>
</feature>
<gene>
    <name type="primary">PPP2R3C</name>
</gene>
<comment type="function">
    <text evidence="1 2">May regulate MCM3AP phosphorylation through phosphatase recruitment. May act as a negative regulator of ABCB1 expression and function through the dephosphorylation of ABCB1 by TFPI2/PPP2R3C complex. May play a role in the activation-induced cell death of B-cells.</text>
</comment>
<comment type="subunit">
    <text evidence="1 2">Interacts with MCM3AP/GANP, PPP5C, and the phosphatase 2A core enzyme composed of the PPP2CA catalytic subunit and the constant regulatory subunit PPP2R1A. Finds in a complex with ABCB1, TFPI2 and PPP2R3C; leading to the dephosphorylation of ABCB1.</text>
</comment>
<comment type="subcellular location">
    <subcellularLocation>
        <location evidence="2">Nucleus</location>
    </subcellularLocation>
    <subcellularLocation>
        <location evidence="2">Cytoplasm</location>
    </subcellularLocation>
    <text evidence="2">Excluded from the nucleoli. Localization is cell cycle-dependent. Localizes to the cytoplasm during cytokinesis.</text>
</comment>
<evidence type="ECO:0000250" key="1">
    <source>
        <dbReference type="UniProtKB" id="Q969Q6"/>
    </source>
</evidence>
<evidence type="ECO:0000250" key="2">
    <source>
        <dbReference type="UniProtKB" id="Q9JK24"/>
    </source>
</evidence>
<evidence type="ECO:0000255" key="3">
    <source>
        <dbReference type="PROSITE-ProRule" id="PRU10142"/>
    </source>
</evidence>
<accession>Q5E9G1</accession>
<keyword id="KW-0106">Calcium</keyword>
<keyword id="KW-0963">Cytoplasm</keyword>
<keyword id="KW-0479">Metal-binding</keyword>
<keyword id="KW-0539">Nucleus</keyword>
<keyword id="KW-1185">Reference proteome</keyword>
<keyword id="KW-0677">Repeat</keyword>
<sequence length="453" mass="53393">MDWKEILRRRLATPSTSPHKKKSEQELKDEEMDLFTKYYSEWKGGRKNTNEFYKTIPRFYYRLPAEDEVLLQKLREESRAVFLQRKSRELLDNEELQNLWFLLDKHQTPPMIGEEAMINYENFLKVGEKAGPKCKQFFTAKVFAKLLHTDSYGRISIMQFFNYVMRKVWLHQTRIGLSLYDVAGQGYLRESDLENYILELIPTLPQLDGLEKSFYSFYVCTAVRKFFFFLDPLRTGKIKIQDILACSFLDDLLELRDEELSKESQETNWFSAPSALRVYGQYLNLDKDHNGMLSKEELSRYGTATMTNVFLDRVFQECLTYDGEMDYKTYLDFVLALENRKEPAALQYIFKLLDIENKGYLNVFSLNYFFRAIQELMKIHGQDPVSFQDVKDEIFDMVKPKDPLKISLQDLINSNQGDTVTTILIDLNGFWTYENREALVANDNENSTDLDDT</sequence>
<name>P2R3C_BOVIN</name>
<dbReference type="EMBL" id="BT020959">
    <property type="protein sequence ID" value="AAX08976.1"/>
    <property type="molecule type" value="mRNA"/>
</dbReference>
<dbReference type="EMBL" id="BC102393">
    <property type="protein sequence ID" value="AAI02394.1"/>
    <property type="molecule type" value="mRNA"/>
</dbReference>
<dbReference type="RefSeq" id="NP_001015645.1">
    <property type="nucleotide sequence ID" value="NM_001015645.1"/>
</dbReference>
<dbReference type="SMR" id="Q5E9G1"/>
<dbReference type="FunCoup" id="Q5E9G1">
    <property type="interactions" value="3438"/>
</dbReference>
<dbReference type="STRING" id="9913.ENSBTAP00000012770"/>
<dbReference type="PaxDb" id="9913-ENSBTAP00000012770"/>
<dbReference type="GeneID" id="533147"/>
<dbReference type="KEGG" id="bta:533147"/>
<dbReference type="CTD" id="55012"/>
<dbReference type="VEuPathDB" id="HostDB:ENSBTAG00000009681"/>
<dbReference type="eggNOG" id="KOG2562">
    <property type="taxonomic scope" value="Eukaryota"/>
</dbReference>
<dbReference type="HOGENOM" id="CLU_035365_1_0_1"/>
<dbReference type="InParanoid" id="Q5E9G1"/>
<dbReference type="OMA" id="HKFWAYE"/>
<dbReference type="OrthoDB" id="10265007at2759"/>
<dbReference type="TreeFam" id="TF318412"/>
<dbReference type="Proteomes" id="UP000009136">
    <property type="component" value="Chromosome 21"/>
</dbReference>
<dbReference type="Bgee" id="ENSBTAG00000009681">
    <property type="expression patterns" value="Expressed in spermatid and 106 other cell types or tissues"/>
</dbReference>
<dbReference type="GO" id="GO:0005813">
    <property type="term" value="C:centrosome"/>
    <property type="evidence" value="ECO:0000318"/>
    <property type="project" value="GO_Central"/>
</dbReference>
<dbReference type="GO" id="GO:0005737">
    <property type="term" value="C:cytoplasm"/>
    <property type="evidence" value="ECO:0007669"/>
    <property type="project" value="UniProtKB-SubCell"/>
</dbReference>
<dbReference type="GO" id="GO:0005634">
    <property type="term" value="C:nucleus"/>
    <property type="evidence" value="ECO:0007669"/>
    <property type="project" value="UniProtKB-SubCell"/>
</dbReference>
<dbReference type="GO" id="GO:0046872">
    <property type="term" value="F:metal ion binding"/>
    <property type="evidence" value="ECO:0007669"/>
    <property type="project" value="UniProtKB-KW"/>
</dbReference>
<dbReference type="GO" id="GO:0001782">
    <property type="term" value="P:B cell homeostasis"/>
    <property type="evidence" value="ECO:0000318"/>
    <property type="project" value="GO_Central"/>
</dbReference>
<dbReference type="GO" id="GO:0030865">
    <property type="term" value="P:cortical cytoskeleton organization"/>
    <property type="evidence" value="ECO:0000318"/>
    <property type="project" value="GO_Central"/>
</dbReference>
<dbReference type="GO" id="GO:0000226">
    <property type="term" value="P:microtubule cytoskeleton organization"/>
    <property type="evidence" value="ECO:0000318"/>
    <property type="project" value="GO_Central"/>
</dbReference>
<dbReference type="GO" id="GO:0045579">
    <property type="term" value="P:positive regulation of B cell differentiation"/>
    <property type="evidence" value="ECO:0000318"/>
    <property type="project" value="GO_Central"/>
</dbReference>
<dbReference type="GO" id="GO:0035303">
    <property type="term" value="P:regulation of dephosphorylation"/>
    <property type="evidence" value="ECO:0007669"/>
    <property type="project" value="InterPro"/>
</dbReference>
<dbReference type="GO" id="GO:0043029">
    <property type="term" value="P:T cell homeostasis"/>
    <property type="evidence" value="ECO:0000318"/>
    <property type="project" value="GO_Central"/>
</dbReference>
<dbReference type="CDD" id="cd21505">
    <property type="entry name" value="PPP2R3C"/>
    <property type="match status" value="1"/>
</dbReference>
<dbReference type="FunFam" id="1.10.238.10:FF:000091">
    <property type="entry name" value="Serine/threonine-protein phosphatase 2A regulatory subunit B'' subunit gamma"/>
    <property type="match status" value="1"/>
</dbReference>
<dbReference type="FunFam" id="1.10.238.220:FF:000002">
    <property type="entry name" value="Serine/threonine-protein phosphatase 2A regulatory subunit B'' subunit gamma"/>
    <property type="match status" value="1"/>
</dbReference>
<dbReference type="Gene3D" id="1.10.238.220">
    <property type="match status" value="1"/>
</dbReference>
<dbReference type="Gene3D" id="1.10.238.10">
    <property type="entry name" value="EF-hand"/>
    <property type="match status" value="1"/>
</dbReference>
<dbReference type="InterPro" id="IPR011992">
    <property type="entry name" value="EF-hand-dom_pair"/>
</dbReference>
<dbReference type="InterPro" id="IPR041534">
    <property type="entry name" value="EF-hand_13"/>
</dbReference>
<dbReference type="InterPro" id="IPR018247">
    <property type="entry name" value="EF_Hand_1_Ca_BS"/>
</dbReference>
<dbReference type="InterPro" id="IPR039865">
    <property type="entry name" value="PPP2R3C"/>
</dbReference>
<dbReference type="PANTHER" id="PTHR12085">
    <property type="entry name" value="SERINE/THREONINE-PROTEIN PHOSPHATASE 2A REGULATORY SUBUNIT B'' SUBUNIT GAMMA"/>
    <property type="match status" value="1"/>
</dbReference>
<dbReference type="PANTHER" id="PTHR12085:SF3">
    <property type="entry name" value="SERINE_THREONINE-PROTEIN PHOSPHATASE 2A REGULATORY SUBUNIT B'' SUBUNIT GAMMA"/>
    <property type="match status" value="1"/>
</dbReference>
<dbReference type="Pfam" id="PF17958">
    <property type="entry name" value="EF-hand_13"/>
    <property type="match status" value="1"/>
</dbReference>
<dbReference type="SUPFAM" id="SSF47473">
    <property type="entry name" value="EF-hand"/>
    <property type="match status" value="2"/>
</dbReference>
<dbReference type="PROSITE" id="PS00018">
    <property type="entry name" value="EF_HAND_1"/>
    <property type="match status" value="1"/>
</dbReference>